<accession>Q94A28</accession>
<accession>Q9SZ36</accession>
<reference key="1">
    <citation type="journal article" date="1999" name="Nature">
        <title>Sequence and analysis of chromosome 4 of the plant Arabidopsis thaliana.</title>
        <authorList>
            <person name="Mayer K.F.X."/>
            <person name="Schueller C."/>
            <person name="Wambutt R."/>
            <person name="Murphy G."/>
            <person name="Volckaert G."/>
            <person name="Pohl T."/>
            <person name="Duesterhoeft A."/>
            <person name="Stiekema W."/>
            <person name="Entian K.-D."/>
            <person name="Terryn N."/>
            <person name="Harris B."/>
            <person name="Ansorge W."/>
            <person name="Brandt P."/>
            <person name="Grivell L.A."/>
            <person name="Rieger M."/>
            <person name="Weichselgartner M."/>
            <person name="de Simone V."/>
            <person name="Obermaier B."/>
            <person name="Mache R."/>
            <person name="Mueller M."/>
            <person name="Kreis M."/>
            <person name="Delseny M."/>
            <person name="Puigdomenech P."/>
            <person name="Watson M."/>
            <person name="Schmidtheini T."/>
            <person name="Reichert B."/>
            <person name="Portetelle D."/>
            <person name="Perez-Alonso M."/>
            <person name="Boutry M."/>
            <person name="Bancroft I."/>
            <person name="Vos P."/>
            <person name="Hoheisel J."/>
            <person name="Zimmermann W."/>
            <person name="Wedler H."/>
            <person name="Ridley P."/>
            <person name="Langham S.-A."/>
            <person name="McCullagh B."/>
            <person name="Bilham L."/>
            <person name="Robben J."/>
            <person name="van der Schueren J."/>
            <person name="Grymonprez B."/>
            <person name="Chuang Y.-J."/>
            <person name="Vandenbussche F."/>
            <person name="Braeken M."/>
            <person name="Weltjens I."/>
            <person name="Voet M."/>
            <person name="Bastiaens I."/>
            <person name="Aert R."/>
            <person name="Defoor E."/>
            <person name="Weitzenegger T."/>
            <person name="Bothe G."/>
            <person name="Ramsperger U."/>
            <person name="Hilbert H."/>
            <person name="Braun M."/>
            <person name="Holzer E."/>
            <person name="Brandt A."/>
            <person name="Peters S."/>
            <person name="van Staveren M."/>
            <person name="Dirkse W."/>
            <person name="Mooijman P."/>
            <person name="Klein Lankhorst R."/>
            <person name="Rose M."/>
            <person name="Hauf J."/>
            <person name="Koetter P."/>
            <person name="Berneiser S."/>
            <person name="Hempel S."/>
            <person name="Feldpausch M."/>
            <person name="Lamberth S."/>
            <person name="Van den Daele H."/>
            <person name="De Keyser A."/>
            <person name="Buysshaert C."/>
            <person name="Gielen J."/>
            <person name="Villarroel R."/>
            <person name="De Clercq R."/>
            <person name="van Montagu M."/>
            <person name="Rogers J."/>
            <person name="Cronin A."/>
            <person name="Quail M.A."/>
            <person name="Bray-Allen S."/>
            <person name="Clark L."/>
            <person name="Doggett J."/>
            <person name="Hall S."/>
            <person name="Kay M."/>
            <person name="Lennard N."/>
            <person name="McLay K."/>
            <person name="Mayes R."/>
            <person name="Pettett A."/>
            <person name="Rajandream M.A."/>
            <person name="Lyne M."/>
            <person name="Benes V."/>
            <person name="Rechmann S."/>
            <person name="Borkova D."/>
            <person name="Bloecker H."/>
            <person name="Scharfe M."/>
            <person name="Grimm M."/>
            <person name="Loehnert T.-H."/>
            <person name="Dose S."/>
            <person name="de Haan M."/>
            <person name="Maarse A.C."/>
            <person name="Schaefer M."/>
            <person name="Mueller-Auer S."/>
            <person name="Gabel C."/>
            <person name="Fuchs M."/>
            <person name="Fartmann B."/>
            <person name="Granderath K."/>
            <person name="Dauner D."/>
            <person name="Herzl A."/>
            <person name="Neumann S."/>
            <person name="Argiriou A."/>
            <person name="Vitale D."/>
            <person name="Liguori R."/>
            <person name="Piravandi E."/>
            <person name="Massenet O."/>
            <person name="Quigley F."/>
            <person name="Clabauld G."/>
            <person name="Muendlein A."/>
            <person name="Felber R."/>
            <person name="Schnabl S."/>
            <person name="Hiller R."/>
            <person name="Schmidt W."/>
            <person name="Lecharny A."/>
            <person name="Aubourg S."/>
            <person name="Chefdor F."/>
            <person name="Cooke R."/>
            <person name="Berger C."/>
            <person name="Monfort A."/>
            <person name="Casacuberta E."/>
            <person name="Gibbons T."/>
            <person name="Weber N."/>
            <person name="Vandenbol M."/>
            <person name="Bargues M."/>
            <person name="Terol J."/>
            <person name="Torres A."/>
            <person name="Perez-Perez A."/>
            <person name="Purnelle B."/>
            <person name="Bent E."/>
            <person name="Johnson S."/>
            <person name="Tacon D."/>
            <person name="Jesse T."/>
            <person name="Heijnen L."/>
            <person name="Schwarz S."/>
            <person name="Scholler P."/>
            <person name="Heber S."/>
            <person name="Francs P."/>
            <person name="Bielke C."/>
            <person name="Frishman D."/>
            <person name="Haase D."/>
            <person name="Lemcke K."/>
            <person name="Mewes H.-W."/>
            <person name="Stocker S."/>
            <person name="Zaccaria P."/>
            <person name="Bevan M."/>
            <person name="Wilson R.K."/>
            <person name="de la Bastide M."/>
            <person name="Habermann K."/>
            <person name="Parnell L."/>
            <person name="Dedhia N."/>
            <person name="Gnoj L."/>
            <person name="Schutz K."/>
            <person name="Huang E."/>
            <person name="Spiegel L."/>
            <person name="Sekhon M."/>
            <person name="Murray J."/>
            <person name="Sheet P."/>
            <person name="Cordes M."/>
            <person name="Abu-Threideh J."/>
            <person name="Stoneking T."/>
            <person name="Kalicki J."/>
            <person name="Graves T."/>
            <person name="Harmon G."/>
            <person name="Edwards J."/>
            <person name="Latreille P."/>
            <person name="Courtney L."/>
            <person name="Cloud J."/>
            <person name="Abbott A."/>
            <person name="Scott K."/>
            <person name="Johnson D."/>
            <person name="Minx P."/>
            <person name="Bentley D."/>
            <person name="Fulton B."/>
            <person name="Miller N."/>
            <person name="Greco T."/>
            <person name="Kemp K."/>
            <person name="Kramer J."/>
            <person name="Fulton L."/>
            <person name="Mardis E."/>
            <person name="Dante M."/>
            <person name="Pepin K."/>
            <person name="Hillier L.W."/>
            <person name="Nelson J."/>
            <person name="Spieth J."/>
            <person name="Ryan E."/>
            <person name="Andrews S."/>
            <person name="Geisel C."/>
            <person name="Layman D."/>
            <person name="Du H."/>
            <person name="Ali J."/>
            <person name="Berghoff A."/>
            <person name="Jones K."/>
            <person name="Drone K."/>
            <person name="Cotton M."/>
            <person name="Joshu C."/>
            <person name="Antonoiu B."/>
            <person name="Zidanic M."/>
            <person name="Strong C."/>
            <person name="Sun H."/>
            <person name="Lamar B."/>
            <person name="Yordan C."/>
            <person name="Ma P."/>
            <person name="Zhong J."/>
            <person name="Preston R."/>
            <person name="Vil D."/>
            <person name="Shekher M."/>
            <person name="Matero A."/>
            <person name="Shah R."/>
            <person name="Swaby I.K."/>
            <person name="O'Shaughnessy A."/>
            <person name="Rodriguez M."/>
            <person name="Hoffman J."/>
            <person name="Till S."/>
            <person name="Granat S."/>
            <person name="Shohdy N."/>
            <person name="Hasegawa A."/>
            <person name="Hameed A."/>
            <person name="Lodhi M."/>
            <person name="Johnson A."/>
            <person name="Chen E."/>
            <person name="Marra M.A."/>
            <person name="Martienssen R."/>
            <person name="McCombie W.R."/>
        </authorList>
    </citation>
    <scope>NUCLEOTIDE SEQUENCE [LARGE SCALE GENOMIC DNA]</scope>
    <source>
        <strain>cv. Columbia</strain>
    </source>
</reference>
<reference key="2">
    <citation type="journal article" date="2017" name="Plant J.">
        <title>Araport11: a complete reannotation of the Arabidopsis thaliana reference genome.</title>
        <authorList>
            <person name="Cheng C.Y."/>
            <person name="Krishnakumar V."/>
            <person name="Chan A.P."/>
            <person name="Thibaud-Nissen F."/>
            <person name="Schobel S."/>
            <person name="Town C.D."/>
        </authorList>
    </citation>
    <scope>GENOME REANNOTATION</scope>
    <source>
        <strain>cv. Columbia</strain>
    </source>
</reference>
<reference key="3">
    <citation type="journal article" date="2003" name="Science">
        <title>Empirical analysis of transcriptional activity in the Arabidopsis genome.</title>
        <authorList>
            <person name="Yamada K."/>
            <person name="Lim J."/>
            <person name="Dale J.M."/>
            <person name="Chen H."/>
            <person name="Shinn P."/>
            <person name="Palm C.J."/>
            <person name="Southwick A.M."/>
            <person name="Wu H.C."/>
            <person name="Kim C.J."/>
            <person name="Nguyen M."/>
            <person name="Pham P.K."/>
            <person name="Cheuk R.F."/>
            <person name="Karlin-Newmann G."/>
            <person name="Liu S.X."/>
            <person name="Lam B."/>
            <person name="Sakano H."/>
            <person name="Wu T."/>
            <person name="Yu G."/>
            <person name="Miranda M."/>
            <person name="Quach H.L."/>
            <person name="Tripp M."/>
            <person name="Chang C.H."/>
            <person name="Lee J.M."/>
            <person name="Toriumi M.J."/>
            <person name="Chan M.M."/>
            <person name="Tang C.C."/>
            <person name="Onodera C.S."/>
            <person name="Deng J.M."/>
            <person name="Akiyama K."/>
            <person name="Ansari Y."/>
            <person name="Arakawa T."/>
            <person name="Banh J."/>
            <person name="Banno F."/>
            <person name="Bowser L."/>
            <person name="Brooks S.Y."/>
            <person name="Carninci P."/>
            <person name="Chao Q."/>
            <person name="Choy N."/>
            <person name="Enju A."/>
            <person name="Goldsmith A.D."/>
            <person name="Gurjal M."/>
            <person name="Hansen N.F."/>
            <person name="Hayashizaki Y."/>
            <person name="Johnson-Hopson C."/>
            <person name="Hsuan V.W."/>
            <person name="Iida K."/>
            <person name="Karnes M."/>
            <person name="Khan S."/>
            <person name="Koesema E."/>
            <person name="Ishida J."/>
            <person name="Jiang P.X."/>
            <person name="Jones T."/>
            <person name="Kawai J."/>
            <person name="Kamiya A."/>
            <person name="Meyers C."/>
            <person name="Nakajima M."/>
            <person name="Narusaka M."/>
            <person name="Seki M."/>
            <person name="Sakurai T."/>
            <person name="Satou M."/>
            <person name="Tamse R."/>
            <person name="Vaysberg M."/>
            <person name="Wallender E.K."/>
            <person name="Wong C."/>
            <person name="Yamamura Y."/>
            <person name="Yuan S."/>
            <person name="Shinozaki K."/>
            <person name="Davis R.W."/>
            <person name="Theologis A."/>
            <person name="Ecker J.R."/>
        </authorList>
    </citation>
    <scope>NUCLEOTIDE SEQUENCE [LARGE SCALE MRNA]</scope>
    <source>
        <strain>cv. Columbia</strain>
    </source>
</reference>
<reference key="4">
    <citation type="journal article" date="2007" name="Biochem. J.">
        <title>The iron-responsive element (IRE)/iron-regulatory protein 1 (IRP1)-cytosolic aconitase iron-regulatory switch does not operate in plants.</title>
        <authorList>
            <person name="Arnaud N."/>
            <person name="Ravet K."/>
            <person name="Borlotti A."/>
            <person name="Touraine B."/>
            <person name="Boucherez J."/>
            <person name="Fizames C."/>
            <person name="Briat J.F."/>
            <person name="Cellier F."/>
            <person name="Gaymard F."/>
        </authorList>
    </citation>
    <scope>DISRUPTION PHENOTYPE</scope>
    <scope>TISSUE SPECIFICITY</scope>
    <scope>RESPONSE TO IRON STARVATION</scope>
    <scope>GENE FAMILY</scope>
    <source>
        <strain>cv. Columbia</strain>
    </source>
</reference>
<reference key="5">
    <citation type="journal article" date="2007" name="Plant Mol. Biol.">
        <title>Aconitase plays a role in regulating resistance to oxidative stress and cell death in Arabidopsis and Nicotiana benthamiana.</title>
        <authorList>
            <person name="Moeder W."/>
            <person name="Del Pozo O."/>
            <person name="Navarre D.A."/>
            <person name="Martin G.B."/>
            <person name="Klessig D.F."/>
        </authorList>
    </citation>
    <scope>FUNCTION</scope>
    <scope>DISRUPTION PHENOTYPE</scope>
</reference>
<reference key="6">
    <citation type="journal article" date="2004" name="Plant Cell">
        <title>Experimental analysis of the Arabidopsis mitochondrial proteome highlights signaling and regulatory components, provides assessment of targeting prediction programs, and indicates plant-specific mitochondrial proteins.</title>
        <authorList>
            <person name="Heazlewood J.L."/>
            <person name="Tonti-Filippini J.S."/>
            <person name="Gout A.M."/>
            <person name="Day D.A."/>
            <person name="Whelan J."/>
            <person name="Millar A.H."/>
        </authorList>
    </citation>
    <scope>IDENTIFICATION BY MASS SPECTROMETRY</scope>
    <scope>SUBCELLULAR LOCATION [LARGE SCALE ANALYSIS]</scope>
    <source>
        <strain>cv. Landsberg erecta</strain>
    </source>
</reference>
<reference key="7">
    <citation type="journal article" date="2014" name="Biochem. J.">
        <title>Selective induction and subcellular distribution of ACONITASE 3 reveal the importance of cytosolic citrate metabolism during lipid mobilization in Arabidopsis.</title>
        <authorList>
            <person name="Hooks M.A."/>
            <person name="Allwood J.W."/>
            <person name="Harrison J.K."/>
            <person name="Kopka J."/>
            <person name="Erban A."/>
            <person name="Goodacre R."/>
            <person name="Balk J."/>
        </authorList>
    </citation>
    <scope>FUNCTION</scope>
    <scope>DISRUPTION PHENOTYPE</scope>
    <source>
        <strain>cv. Columbia</strain>
    </source>
</reference>
<reference key="8">
    <citation type="journal article" date="2014" name="Plant Physiol.">
        <title>Selected reaction monitoring to determine protein abundance in Arabidopsis using the Arabidopsis proteotypic predictor.</title>
        <authorList>
            <person name="Taylor N.L."/>
            <person name="Fenske R."/>
            <person name="Castleden I."/>
            <person name="Tomaz T."/>
            <person name="Nelson C.J."/>
            <person name="Millar A.H."/>
        </authorList>
    </citation>
    <scope>GENE FAMILY</scope>
    <scope>IDENTIFICATION BY MASS SPECTROMETRY</scope>
</reference>
<sequence length="995" mass="108481">MYRRATSGVRSASARLSSSLSRIASSETASVSAPSASSLRNQTNRSKSFSSALRSFRVCSASTRWSHGGSWGSPASLRAQARNSTPVMEKFERKYATMASEHSYKDILTSLPKPGGGEYGKYYSLPALNDPRIDKLPFSVRILLESAIRNCDNYQVTKDDVEKILDWENTSTKQVEIAFKPARVILQDFTGVPVLVDLASMRDAVKNLGSDPSKINPLVPVDLVVDHSIQVDFARSEDAAQKNLELEFKRNKERFTFLKWGSTAFQNMLVVPPGSGIVHQVNLEYLGRVVFNSKGFLYPDSVVGTDSHTTMIDGLGVAGWGVGGIEAEAAMLGQPMSMVLPGVVGFKLDGKLKEGVTATDLVLTVTQILRKHGVVGKFVEFYGEGMSELSLADRATIANMSPEYGATMGFFPVDHVTLEYLKLTGRSDETVSMIESYLRANNMFVDYNEPQQERAYTSYLQLDLGHVEPCISGPKRPHDRVPLKDMKADWHACLDNPVGFKGFAVPKEKQEEVVKFSYNGQPAEIKHGSVVIAAITSCTNTSNPSVMIGAALVAKKASDLGLKVKPWVKTSLAPGSRVVEKYLDRSGLRESLTKQGFEIVGYGCTTCIGNSGNLDPEVASAIEGTDIIPAAVLSGNRNFEGRVHPQTRANYLASPPLVVAYALAGTVDIDFEKEPIGTRSDGKSVYLRDVWPSNEEVAQVVQYSVLPSMFKSSYETITEGNPLWNELSAPSSTLYSWDPNSTYIHEPPYFKNMTANPPGPREVKDAYCLLNFGDSVTTDHISPAGNIQKTSPAAKFLMDRGVISEDFNSYGSRRGNDEVMARGTFANIRIVNKLLKGEVGPNTVHIPTGEKLSVFDAASKYKTAEQDTIILAGAEYGSGSSRDWAAKGPLLLGVKAVIAKSFERIHRSNLAGMGIIPLCFKAGEDAETLGLTGHERYTVHLPTKVSDIRPGQDVTVTTDSGKSFVCTLRFDTEVELAYYDHGGILPYVIRSLSAK</sequence>
<protein>
    <recommendedName>
        <fullName evidence="9">Aconitate hydratase 2, mitochondrial</fullName>
        <shortName evidence="9">Aconitase 2</shortName>
        <shortName evidence="8">mACO2</shortName>
        <ecNumber evidence="1">4.2.1.3</ecNumber>
    </recommendedName>
    <alternativeName>
        <fullName evidence="9">Citrate hydro-lyase 2</fullName>
    </alternativeName>
</protein>
<organism>
    <name type="scientific">Arabidopsis thaliana</name>
    <name type="common">Mouse-ear cress</name>
    <dbReference type="NCBI Taxonomy" id="3702"/>
    <lineage>
        <taxon>Eukaryota</taxon>
        <taxon>Viridiplantae</taxon>
        <taxon>Streptophyta</taxon>
        <taxon>Embryophyta</taxon>
        <taxon>Tracheophyta</taxon>
        <taxon>Spermatophyta</taxon>
        <taxon>Magnoliopsida</taxon>
        <taxon>eudicotyledons</taxon>
        <taxon>Gunneridae</taxon>
        <taxon>Pentapetalae</taxon>
        <taxon>rosids</taxon>
        <taxon>malvids</taxon>
        <taxon>Brassicales</taxon>
        <taxon>Brassicaceae</taxon>
        <taxon>Camelineae</taxon>
        <taxon>Arabidopsis</taxon>
    </lineage>
</organism>
<evidence type="ECO:0000250" key="1">
    <source>
        <dbReference type="UniProtKB" id="P19414"/>
    </source>
</evidence>
<evidence type="ECO:0000250" key="2">
    <source>
        <dbReference type="UniProtKB" id="P20004"/>
    </source>
</evidence>
<evidence type="ECO:0000255" key="3"/>
<evidence type="ECO:0000269" key="4">
    <source>
    </source>
</evidence>
<evidence type="ECO:0000269" key="5">
    <source>
    </source>
</evidence>
<evidence type="ECO:0000269" key="6">
    <source>
    </source>
</evidence>
<evidence type="ECO:0000269" key="7">
    <source>
    </source>
</evidence>
<evidence type="ECO:0000303" key="8">
    <source>
    </source>
</evidence>
<evidence type="ECO:0000303" key="9">
    <source>
    </source>
</evidence>
<evidence type="ECO:0000305" key="10"/>
<evidence type="ECO:0000312" key="11">
    <source>
        <dbReference type="Araport" id="AT4G26970"/>
    </source>
</evidence>
<evidence type="ECO:0000312" key="12">
    <source>
        <dbReference type="EMBL" id="CAB36543.1"/>
    </source>
</evidence>
<comment type="function">
    <text evidence="5 7">Catalyzes the isomerization of citrate to isocitrate via cis-aconitate. Contributes to oxidative stress tolerance (PubMed:17013749). Involved in acetate assimilation (PubMed:25061985).</text>
</comment>
<comment type="catalytic activity">
    <reaction evidence="1">
        <text>citrate = D-threo-isocitrate</text>
        <dbReference type="Rhea" id="RHEA:10336"/>
        <dbReference type="ChEBI" id="CHEBI:15562"/>
        <dbReference type="ChEBI" id="CHEBI:16947"/>
        <dbReference type="EC" id="4.2.1.3"/>
    </reaction>
</comment>
<comment type="cofactor">
    <cofactor evidence="2">
        <name>[4Fe-4S] cluster</name>
        <dbReference type="ChEBI" id="CHEBI:49883"/>
    </cofactor>
    <text evidence="2">Binds 1 [4Fe-4S] cluster per subunit.</text>
</comment>
<comment type="pathway">
    <text evidence="1">Carbohydrate metabolism; tricarboxylic acid cycle; isocitrate from oxaloacetate: step 2/2.</text>
</comment>
<comment type="subunit">
    <text evidence="2">Monomer.</text>
</comment>
<comment type="subcellular location">
    <subcellularLocation>
        <location evidence="4">Mitochondrion</location>
    </subcellularLocation>
</comment>
<comment type="tissue specificity">
    <text evidence="6">Mostly expressed in roots, leaves and flowers, also present in stems, and, at low levels, in seeds.</text>
</comment>
<comment type="induction">
    <text evidence="6">Slight level decrease after 3 days of iron starvation.</text>
</comment>
<comment type="disruption phenotype">
    <text evidence="5 6 7">Reduced mitochondrial aconitase (ACO) activity by 20 percent (PubMed:17013749, PubMed:17437406). Increased tolerance to oxidative stress mediated by paraquat, a superoxide-generating agent (PubMed:17013749). Altered acetate assimilation leading to lower levels of CO(2), CHO and SO, and higher OAs (organic acids) accumulation, especially fumarate (PubMed:25061985).</text>
</comment>
<comment type="similarity">
    <text evidence="10">Belongs to the aconitase/IPM isomerase family.</text>
</comment>
<comment type="sequence caution" evidence="10">
    <conflict type="erroneous gene model prediction">
        <sequence resource="EMBL-CDS" id="CAB36543"/>
    </conflict>
</comment>
<comment type="sequence caution" evidence="10">
    <conflict type="erroneous gene model prediction">
        <sequence resource="EMBL-CDS" id="CAB79552"/>
    </conflict>
</comment>
<dbReference type="EC" id="4.2.1.3" evidence="1"/>
<dbReference type="EMBL" id="AL035440">
    <property type="protein sequence ID" value="CAB36543.1"/>
    <property type="status" value="ALT_SEQ"/>
    <property type="molecule type" value="Genomic_DNA"/>
</dbReference>
<dbReference type="EMBL" id="AL161566">
    <property type="protein sequence ID" value="CAB79552.1"/>
    <property type="status" value="ALT_SEQ"/>
    <property type="molecule type" value="Genomic_DNA"/>
</dbReference>
<dbReference type="EMBL" id="CP002687">
    <property type="protein sequence ID" value="AEE85279.1"/>
    <property type="molecule type" value="Genomic_DNA"/>
</dbReference>
<dbReference type="EMBL" id="AY050431">
    <property type="protein sequence ID" value="AAK91447.1"/>
    <property type="molecule type" value="mRNA"/>
</dbReference>
<dbReference type="EMBL" id="BT000492">
    <property type="protein sequence ID" value="AAN18061.1"/>
    <property type="molecule type" value="mRNA"/>
</dbReference>
<dbReference type="PIR" id="T04820">
    <property type="entry name" value="T04820"/>
</dbReference>
<dbReference type="RefSeq" id="NP_567763.2">
    <property type="nucleotide sequence ID" value="NM_118831.4"/>
</dbReference>
<dbReference type="SMR" id="Q94A28"/>
<dbReference type="BioGRID" id="14092">
    <property type="interactions" value="5"/>
</dbReference>
<dbReference type="FunCoup" id="Q94A28">
    <property type="interactions" value="2766"/>
</dbReference>
<dbReference type="STRING" id="3702.Q94A28"/>
<dbReference type="iPTMnet" id="Q94A28"/>
<dbReference type="MetOSite" id="Q94A28"/>
<dbReference type="PaxDb" id="3702-AT4G26970.1"/>
<dbReference type="ProteomicsDB" id="244750"/>
<dbReference type="EnsemblPlants" id="AT4G26970.1">
    <property type="protein sequence ID" value="AT4G26970.1"/>
    <property type="gene ID" value="AT4G26970"/>
</dbReference>
<dbReference type="GeneID" id="828805"/>
<dbReference type="Gramene" id="AT4G26970.1">
    <property type="protein sequence ID" value="AT4G26970.1"/>
    <property type="gene ID" value="AT4G26970"/>
</dbReference>
<dbReference type="KEGG" id="ath:AT4G26970"/>
<dbReference type="Araport" id="AT4G26970"/>
<dbReference type="TAIR" id="AT4G26970">
    <property type="gene designation" value="ACO2"/>
</dbReference>
<dbReference type="eggNOG" id="KOG0452">
    <property type="taxonomic scope" value="Eukaryota"/>
</dbReference>
<dbReference type="HOGENOM" id="CLU_013476_2_1_1"/>
<dbReference type="InParanoid" id="Q94A28"/>
<dbReference type="OMA" id="KYATMAS"/>
<dbReference type="UniPathway" id="UPA00223">
    <property type="reaction ID" value="UER00718"/>
</dbReference>
<dbReference type="CD-CODE" id="4299E36E">
    <property type="entry name" value="Nucleolus"/>
</dbReference>
<dbReference type="PRO" id="PR:Q94A28"/>
<dbReference type="Proteomes" id="UP000006548">
    <property type="component" value="Chromosome 4"/>
</dbReference>
<dbReference type="ExpressionAtlas" id="Q94A28">
    <property type="expression patterns" value="baseline and differential"/>
</dbReference>
<dbReference type="GO" id="GO:0009507">
    <property type="term" value="C:chloroplast"/>
    <property type="evidence" value="ECO:0007005"/>
    <property type="project" value="TAIR"/>
</dbReference>
<dbReference type="GO" id="GO:0005829">
    <property type="term" value="C:cytosol"/>
    <property type="evidence" value="ECO:0007005"/>
    <property type="project" value="TAIR"/>
</dbReference>
<dbReference type="GO" id="GO:0005739">
    <property type="term" value="C:mitochondrion"/>
    <property type="evidence" value="ECO:0007005"/>
    <property type="project" value="TAIR"/>
</dbReference>
<dbReference type="GO" id="GO:0051539">
    <property type="term" value="F:4 iron, 4 sulfur cluster binding"/>
    <property type="evidence" value="ECO:0007669"/>
    <property type="project" value="UniProtKB-KW"/>
</dbReference>
<dbReference type="GO" id="GO:0003994">
    <property type="term" value="F:aconitate hydratase activity"/>
    <property type="evidence" value="ECO:0000315"/>
    <property type="project" value="TAIR"/>
</dbReference>
<dbReference type="GO" id="GO:0005507">
    <property type="term" value="F:copper ion binding"/>
    <property type="evidence" value="ECO:0007005"/>
    <property type="project" value="TAIR"/>
</dbReference>
<dbReference type="GO" id="GO:0006101">
    <property type="term" value="P:citrate metabolic process"/>
    <property type="evidence" value="ECO:0000315"/>
    <property type="project" value="TAIR"/>
</dbReference>
<dbReference type="GO" id="GO:0006097">
    <property type="term" value="P:glyoxylate cycle"/>
    <property type="evidence" value="ECO:0007669"/>
    <property type="project" value="UniProtKB-KW"/>
</dbReference>
<dbReference type="GO" id="GO:0006102">
    <property type="term" value="P:isocitrate metabolic process"/>
    <property type="evidence" value="ECO:0000315"/>
    <property type="project" value="TAIR"/>
</dbReference>
<dbReference type="GO" id="GO:1990641">
    <property type="term" value="P:response to iron ion starvation"/>
    <property type="evidence" value="ECO:0000270"/>
    <property type="project" value="UniProtKB"/>
</dbReference>
<dbReference type="GO" id="GO:0006979">
    <property type="term" value="P:response to oxidative stress"/>
    <property type="evidence" value="ECO:0000315"/>
    <property type="project" value="TAIR"/>
</dbReference>
<dbReference type="GO" id="GO:0006099">
    <property type="term" value="P:tricarboxylic acid cycle"/>
    <property type="evidence" value="ECO:0007669"/>
    <property type="project" value="UniProtKB-UniPathway"/>
</dbReference>
<dbReference type="CDD" id="cd01586">
    <property type="entry name" value="AcnA_IRP"/>
    <property type="match status" value="1"/>
</dbReference>
<dbReference type="CDD" id="cd01580">
    <property type="entry name" value="AcnA_IRP_Swivel"/>
    <property type="match status" value="1"/>
</dbReference>
<dbReference type="FunFam" id="3.20.19.10:FF:000001">
    <property type="entry name" value="Aconitate hydratase"/>
    <property type="match status" value="1"/>
</dbReference>
<dbReference type="FunFam" id="3.30.499.10:FF:000002">
    <property type="entry name" value="Aconitate hydratase"/>
    <property type="match status" value="1"/>
</dbReference>
<dbReference type="FunFam" id="3.30.499.10:FF:000005">
    <property type="entry name" value="cytoplasmic aconitate hydratase"/>
    <property type="match status" value="1"/>
</dbReference>
<dbReference type="Gene3D" id="6.10.190.10">
    <property type="match status" value="1"/>
</dbReference>
<dbReference type="Gene3D" id="3.30.499.10">
    <property type="entry name" value="Aconitase, domain 3"/>
    <property type="match status" value="2"/>
</dbReference>
<dbReference type="Gene3D" id="3.20.19.10">
    <property type="entry name" value="Aconitase, domain 4"/>
    <property type="match status" value="1"/>
</dbReference>
<dbReference type="InterPro" id="IPR044137">
    <property type="entry name" value="AcnA_IRP_Swivel"/>
</dbReference>
<dbReference type="InterPro" id="IPR015931">
    <property type="entry name" value="Acnase/IPM_dHydase_lsu_aba_1/3"/>
</dbReference>
<dbReference type="InterPro" id="IPR001030">
    <property type="entry name" value="Acoase/IPM_deHydtase_lsu_aba"/>
</dbReference>
<dbReference type="InterPro" id="IPR015928">
    <property type="entry name" value="Aconitase/3IPM_dehydase_swvl"/>
</dbReference>
<dbReference type="InterPro" id="IPR006249">
    <property type="entry name" value="Aconitase/IRP2"/>
</dbReference>
<dbReference type="InterPro" id="IPR018136">
    <property type="entry name" value="Aconitase_4Fe-4S_BS"/>
</dbReference>
<dbReference type="InterPro" id="IPR036008">
    <property type="entry name" value="Aconitase_4Fe-4S_dom"/>
</dbReference>
<dbReference type="InterPro" id="IPR000573">
    <property type="entry name" value="AconitaseA/IPMdHydase_ssu_swvl"/>
</dbReference>
<dbReference type="NCBIfam" id="TIGR01341">
    <property type="entry name" value="aconitase_1"/>
    <property type="match status" value="1"/>
</dbReference>
<dbReference type="NCBIfam" id="NF006757">
    <property type="entry name" value="PRK09277.1"/>
    <property type="match status" value="1"/>
</dbReference>
<dbReference type="NCBIfam" id="NF009520">
    <property type="entry name" value="PRK12881.1"/>
    <property type="match status" value="1"/>
</dbReference>
<dbReference type="PANTHER" id="PTHR11670">
    <property type="entry name" value="ACONITASE/IRON-RESPONSIVE ELEMENT FAMILY MEMBER"/>
    <property type="match status" value="1"/>
</dbReference>
<dbReference type="Pfam" id="PF00330">
    <property type="entry name" value="Aconitase"/>
    <property type="match status" value="1"/>
</dbReference>
<dbReference type="Pfam" id="PF00694">
    <property type="entry name" value="Aconitase_C"/>
    <property type="match status" value="1"/>
</dbReference>
<dbReference type="PRINTS" id="PR00415">
    <property type="entry name" value="ACONITASE"/>
</dbReference>
<dbReference type="SUPFAM" id="SSF53732">
    <property type="entry name" value="Aconitase iron-sulfur domain"/>
    <property type="match status" value="1"/>
</dbReference>
<dbReference type="SUPFAM" id="SSF52016">
    <property type="entry name" value="LeuD/IlvD-like"/>
    <property type="match status" value="1"/>
</dbReference>
<dbReference type="PROSITE" id="PS00450">
    <property type="entry name" value="ACONITASE_1"/>
    <property type="match status" value="1"/>
</dbReference>
<dbReference type="PROSITE" id="PS01244">
    <property type="entry name" value="ACONITASE_2"/>
    <property type="match status" value="1"/>
</dbReference>
<feature type="transit peptide" description="Mitochondrion" evidence="3">
    <location>
        <begin position="1"/>
        <end position="83"/>
    </location>
</feature>
<feature type="chain" id="PRO_0000259922" description="Aconitate hydratase 2, mitochondrial">
    <location>
        <begin position="84"/>
        <end position="995"/>
    </location>
</feature>
<feature type="binding site" evidence="2">
    <location>
        <position position="187"/>
    </location>
    <ligand>
        <name>substrate</name>
    </ligand>
</feature>
<feature type="binding site" evidence="2">
    <location>
        <begin position="306"/>
        <end position="308"/>
    </location>
    <ligand>
        <name>substrate</name>
    </ligand>
</feature>
<feature type="binding site" evidence="2">
    <location>
        <position position="538"/>
    </location>
    <ligand>
        <name>[4Fe-4S] cluster</name>
        <dbReference type="ChEBI" id="CHEBI:49883"/>
    </ligand>
</feature>
<feature type="binding site" evidence="2">
    <location>
        <position position="604"/>
    </location>
    <ligand>
        <name>[4Fe-4S] cluster</name>
        <dbReference type="ChEBI" id="CHEBI:49883"/>
    </ligand>
</feature>
<feature type="binding site" evidence="2">
    <location>
        <position position="607"/>
    </location>
    <ligand>
        <name>[4Fe-4S] cluster</name>
        <dbReference type="ChEBI" id="CHEBI:49883"/>
    </ligand>
</feature>
<feature type="binding site" evidence="2">
    <location>
        <position position="637"/>
    </location>
    <ligand>
        <name>substrate</name>
    </ligand>
</feature>
<feature type="binding site" evidence="2">
    <location>
        <position position="642"/>
    </location>
    <ligand>
        <name>substrate</name>
    </ligand>
</feature>
<feature type="binding site" evidence="2">
    <location>
        <position position="800"/>
    </location>
    <ligand>
        <name>substrate</name>
    </ligand>
</feature>
<feature type="binding site" evidence="2">
    <location>
        <begin position="881"/>
        <end position="882"/>
    </location>
    <ligand>
        <name>substrate</name>
    </ligand>
</feature>
<feature type="sequence conflict" description="In Ref. 3; AAK91447/AAN18061." evidence="10" ref="3">
    <original>T</original>
    <variation>A</variation>
    <location>
        <position position="407"/>
    </location>
</feature>
<feature type="sequence conflict" description="In Ref. 1; CAB36543/CAB79552." evidence="10" ref="1">
    <original>D</original>
    <variation>E</variation>
    <location>
        <position position="463"/>
    </location>
</feature>
<feature type="sequence conflict" description="In Ref. 3; AAK91447/AAN18061." evidence="10" ref="3">
    <original>E</original>
    <variation>G</variation>
    <location>
        <position position="903"/>
    </location>
</feature>
<keyword id="KW-0004">4Fe-4S</keyword>
<keyword id="KW-0329">Glyoxylate bypass</keyword>
<keyword id="KW-0408">Iron</keyword>
<keyword id="KW-0411">Iron-sulfur</keyword>
<keyword id="KW-0456">Lyase</keyword>
<keyword id="KW-0479">Metal-binding</keyword>
<keyword id="KW-0496">Mitochondrion</keyword>
<keyword id="KW-1185">Reference proteome</keyword>
<keyword id="KW-0809">Transit peptide</keyword>
<keyword id="KW-0816">Tricarboxylic acid cycle</keyword>
<proteinExistence type="evidence at protein level"/>
<gene>
    <name evidence="9" type="primary">ACO2</name>
    <name evidence="11" type="ordered locus">At4g26970</name>
    <name evidence="12" type="ORF">F10M23.310</name>
</gene>
<name>ACO2M_ARATH</name>